<dbReference type="EC" id="6.1.1.2" evidence="1"/>
<dbReference type="EMBL" id="AE004092">
    <property type="protein sequence ID" value="AAK34835.1"/>
    <property type="molecule type" value="Genomic_DNA"/>
</dbReference>
<dbReference type="EMBL" id="CP000017">
    <property type="protein sequence ID" value="AAZ52476.1"/>
    <property type="molecule type" value="Genomic_DNA"/>
</dbReference>
<dbReference type="RefSeq" id="NP_270114.1">
    <property type="nucleotide sequence ID" value="NC_002737.2"/>
</dbReference>
<dbReference type="SMR" id="Q99XH4"/>
<dbReference type="PaxDb" id="1314-HKU360_01968"/>
<dbReference type="KEGG" id="spy:SPy_2207"/>
<dbReference type="KEGG" id="spz:M5005_Spy1858"/>
<dbReference type="PATRIC" id="fig|160490.10.peg.1912"/>
<dbReference type="HOGENOM" id="CLU_029244_0_1_9"/>
<dbReference type="OMA" id="PNHIRIE"/>
<dbReference type="Proteomes" id="UP000000750">
    <property type="component" value="Chromosome"/>
</dbReference>
<dbReference type="GO" id="GO:0005829">
    <property type="term" value="C:cytosol"/>
    <property type="evidence" value="ECO:0007669"/>
    <property type="project" value="TreeGrafter"/>
</dbReference>
<dbReference type="GO" id="GO:0005524">
    <property type="term" value="F:ATP binding"/>
    <property type="evidence" value="ECO:0007669"/>
    <property type="project" value="UniProtKB-UniRule"/>
</dbReference>
<dbReference type="GO" id="GO:0004830">
    <property type="term" value="F:tryptophan-tRNA ligase activity"/>
    <property type="evidence" value="ECO:0007669"/>
    <property type="project" value="UniProtKB-UniRule"/>
</dbReference>
<dbReference type="GO" id="GO:0006436">
    <property type="term" value="P:tryptophanyl-tRNA aminoacylation"/>
    <property type="evidence" value="ECO:0007669"/>
    <property type="project" value="UniProtKB-UniRule"/>
</dbReference>
<dbReference type="CDD" id="cd00806">
    <property type="entry name" value="TrpRS_core"/>
    <property type="match status" value="1"/>
</dbReference>
<dbReference type="FunFam" id="1.10.240.10:FF:000005">
    <property type="entry name" value="Tryptophan--tRNA ligase"/>
    <property type="match status" value="1"/>
</dbReference>
<dbReference type="FunFam" id="3.40.50.620:FF:000094">
    <property type="entry name" value="Tryptophan--tRNA ligase"/>
    <property type="match status" value="1"/>
</dbReference>
<dbReference type="Gene3D" id="3.40.50.620">
    <property type="entry name" value="HUPs"/>
    <property type="match status" value="1"/>
</dbReference>
<dbReference type="Gene3D" id="1.10.240.10">
    <property type="entry name" value="Tyrosyl-Transfer RNA Synthetase"/>
    <property type="match status" value="1"/>
</dbReference>
<dbReference type="HAMAP" id="MF_00140_B">
    <property type="entry name" value="Trp_tRNA_synth_B"/>
    <property type="match status" value="1"/>
</dbReference>
<dbReference type="InterPro" id="IPR001412">
    <property type="entry name" value="aa-tRNA-synth_I_CS"/>
</dbReference>
<dbReference type="InterPro" id="IPR002305">
    <property type="entry name" value="aa-tRNA-synth_Ic"/>
</dbReference>
<dbReference type="InterPro" id="IPR014729">
    <property type="entry name" value="Rossmann-like_a/b/a_fold"/>
</dbReference>
<dbReference type="InterPro" id="IPR002306">
    <property type="entry name" value="Trp-tRNA-ligase"/>
</dbReference>
<dbReference type="InterPro" id="IPR024109">
    <property type="entry name" value="Trp-tRNA-ligase_bac-type"/>
</dbReference>
<dbReference type="InterPro" id="IPR050203">
    <property type="entry name" value="Trp-tRNA_synthetase"/>
</dbReference>
<dbReference type="NCBIfam" id="TIGR00233">
    <property type="entry name" value="trpS"/>
    <property type="match status" value="1"/>
</dbReference>
<dbReference type="PANTHER" id="PTHR43766">
    <property type="entry name" value="TRYPTOPHAN--TRNA LIGASE, MITOCHONDRIAL"/>
    <property type="match status" value="1"/>
</dbReference>
<dbReference type="PANTHER" id="PTHR43766:SF1">
    <property type="entry name" value="TRYPTOPHAN--TRNA LIGASE, MITOCHONDRIAL"/>
    <property type="match status" value="1"/>
</dbReference>
<dbReference type="Pfam" id="PF00579">
    <property type="entry name" value="tRNA-synt_1b"/>
    <property type="match status" value="1"/>
</dbReference>
<dbReference type="PRINTS" id="PR01039">
    <property type="entry name" value="TRNASYNTHTRP"/>
</dbReference>
<dbReference type="SUPFAM" id="SSF52374">
    <property type="entry name" value="Nucleotidylyl transferase"/>
    <property type="match status" value="1"/>
</dbReference>
<dbReference type="PROSITE" id="PS00178">
    <property type="entry name" value="AA_TRNA_LIGASE_I"/>
    <property type="match status" value="1"/>
</dbReference>
<protein>
    <recommendedName>
        <fullName evidence="1">Tryptophan--tRNA ligase</fullName>
        <ecNumber evidence="1">6.1.1.2</ecNumber>
    </recommendedName>
    <alternativeName>
        <fullName evidence="1">Tryptophanyl-tRNA synthetase</fullName>
        <shortName evidence="1">TrpRS</shortName>
    </alternativeName>
</protein>
<name>SYW_STRP1</name>
<reference key="1">
    <citation type="journal article" date="2001" name="Proc. Natl. Acad. Sci. U.S.A.">
        <title>Complete genome sequence of an M1 strain of Streptococcus pyogenes.</title>
        <authorList>
            <person name="Ferretti J.J."/>
            <person name="McShan W.M."/>
            <person name="Ajdic D.J."/>
            <person name="Savic D.J."/>
            <person name="Savic G."/>
            <person name="Lyon K."/>
            <person name="Primeaux C."/>
            <person name="Sezate S."/>
            <person name="Suvorov A.N."/>
            <person name="Kenton S."/>
            <person name="Lai H.S."/>
            <person name="Lin S.P."/>
            <person name="Qian Y."/>
            <person name="Jia H.G."/>
            <person name="Najar F.Z."/>
            <person name="Ren Q."/>
            <person name="Zhu H."/>
            <person name="Song L."/>
            <person name="White J."/>
            <person name="Yuan X."/>
            <person name="Clifton S.W."/>
            <person name="Roe B.A."/>
            <person name="McLaughlin R.E."/>
        </authorList>
    </citation>
    <scope>NUCLEOTIDE SEQUENCE [LARGE SCALE GENOMIC DNA]</scope>
    <source>
        <strain>ATCC 700294 / SF370 / Serotype M1</strain>
    </source>
</reference>
<reference key="2">
    <citation type="journal article" date="2005" name="J. Infect. Dis.">
        <title>Evolutionary origin and emergence of a highly successful clone of serotype M1 group A Streptococcus involved multiple horizontal gene transfer events.</title>
        <authorList>
            <person name="Sumby P."/>
            <person name="Porcella S.F."/>
            <person name="Madrigal A.G."/>
            <person name="Barbian K.D."/>
            <person name="Virtaneva K."/>
            <person name="Ricklefs S.M."/>
            <person name="Sturdevant D.E."/>
            <person name="Graham M.R."/>
            <person name="Vuopio-Varkila J."/>
            <person name="Hoe N.P."/>
            <person name="Musser J.M."/>
        </authorList>
    </citation>
    <scope>NUCLEOTIDE SEQUENCE [LARGE SCALE GENOMIC DNA]</scope>
    <source>
        <strain>ATCC BAA-947 / MGAS5005 / Serotype M1</strain>
    </source>
</reference>
<proteinExistence type="inferred from homology"/>
<feature type="chain" id="PRO_0000136692" description="Tryptophan--tRNA ligase">
    <location>
        <begin position="1"/>
        <end position="340"/>
    </location>
</feature>
<feature type="short sequence motif" description="'HIGH' region" evidence="1">
    <location>
        <begin position="12"/>
        <end position="20"/>
    </location>
</feature>
<feature type="short sequence motif" description="'KMSKS' region" evidence="1">
    <location>
        <begin position="202"/>
        <end position="206"/>
    </location>
</feature>
<feature type="binding site" evidence="1">
    <location>
        <begin position="11"/>
        <end position="13"/>
    </location>
    <ligand>
        <name>ATP</name>
        <dbReference type="ChEBI" id="CHEBI:30616"/>
    </ligand>
</feature>
<feature type="binding site" evidence="1">
    <location>
        <begin position="19"/>
        <end position="20"/>
    </location>
    <ligand>
        <name>ATP</name>
        <dbReference type="ChEBI" id="CHEBI:30616"/>
    </ligand>
</feature>
<feature type="binding site" evidence="1">
    <location>
        <position position="140"/>
    </location>
    <ligand>
        <name>L-tryptophan</name>
        <dbReference type="ChEBI" id="CHEBI:57912"/>
    </ligand>
</feature>
<feature type="binding site" evidence="1">
    <location>
        <begin position="152"/>
        <end position="154"/>
    </location>
    <ligand>
        <name>ATP</name>
        <dbReference type="ChEBI" id="CHEBI:30616"/>
    </ligand>
</feature>
<feature type="binding site" evidence="1">
    <location>
        <position position="194"/>
    </location>
    <ligand>
        <name>ATP</name>
        <dbReference type="ChEBI" id="CHEBI:30616"/>
    </ligand>
</feature>
<feature type="binding site" evidence="1">
    <location>
        <begin position="202"/>
        <end position="206"/>
    </location>
    <ligand>
        <name>ATP</name>
        <dbReference type="ChEBI" id="CHEBI:30616"/>
    </ligand>
</feature>
<sequence length="340" mass="38330">MTKPIILTGDRPTGKLHLGHYVGSLKNRVFLQNENKYKMFVFLADQQALTDHAKESELIQESIGNVALDYLSVGLDPKQSTIFIQSQIPELAELSMYYMNLVSLARLERNPTVKTEIAQKGFGESIPSGFLVYPVSQAADITAFKANLVPVGNDQKPMIEQTREIVRSFNHTYHTDCLVEPEGIYPENEKAGRLPGLDGNAKMSKSLGNGIYLSDDADTVRKKVMSMYTDPNHIKIEDPGQIEGNMVFHYLDIFARKEDQADIEAMKEHYQIGGLGDVKTKRYLLDILERELAPIRERRLEYAKDMGEVFRMLQEGSQKARTVAAKTLSEVKSAMGINYF</sequence>
<organism>
    <name type="scientific">Streptococcus pyogenes serotype M1</name>
    <dbReference type="NCBI Taxonomy" id="301447"/>
    <lineage>
        <taxon>Bacteria</taxon>
        <taxon>Bacillati</taxon>
        <taxon>Bacillota</taxon>
        <taxon>Bacilli</taxon>
        <taxon>Lactobacillales</taxon>
        <taxon>Streptococcaceae</taxon>
        <taxon>Streptococcus</taxon>
    </lineage>
</organism>
<accession>Q99XH4</accession>
<accession>Q48VZ9</accession>
<keyword id="KW-0030">Aminoacyl-tRNA synthetase</keyword>
<keyword id="KW-0067">ATP-binding</keyword>
<keyword id="KW-0963">Cytoplasm</keyword>
<keyword id="KW-0436">Ligase</keyword>
<keyword id="KW-0547">Nucleotide-binding</keyword>
<keyword id="KW-0648">Protein biosynthesis</keyword>
<keyword id="KW-1185">Reference proteome</keyword>
<gene>
    <name evidence="1" type="primary">trpS</name>
    <name type="synonym">trsA</name>
    <name type="ordered locus">SPy_2207</name>
    <name type="ordered locus">M5005_Spy1858</name>
</gene>
<comment type="function">
    <text evidence="1">Catalyzes the attachment of tryptophan to tRNA(Trp).</text>
</comment>
<comment type="catalytic activity">
    <reaction evidence="1">
        <text>tRNA(Trp) + L-tryptophan + ATP = L-tryptophyl-tRNA(Trp) + AMP + diphosphate + H(+)</text>
        <dbReference type="Rhea" id="RHEA:24080"/>
        <dbReference type="Rhea" id="RHEA-COMP:9671"/>
        <dbReference type="Rhea" id="RHEA-COMP:9705"/>
        <dbReference type="ChEBI" id="CHEBI:15378"/>
        <dbReference type="ChEBI" id="CHEBI:30616"/>
        <dbReference type="ChEBI" id="CHEBI:33019"/>
        <dbReference type="ChEBI" id="CHEBI:57912"/>
        <dbReference type="ChEBI" id="CHEBI:78442"/>
        <dbReference type="ChEBI" id="CHEBI:78535"/>
        <dbReference type="ChEBI" id="CHEBI:456215"/>
        <dbReference type="EC" id="6.1.1.2"/>
    </reaction>
</comment>
<comment type="subunit">
    <text evidence="1">Homodimer.</text>
</comment>
<comment type="subcellular location">
    <subcellularLocation>
        <location evidence="1">Cytoplasm</location>
    </subcellularLocation>
</comment>
<comment type="similarity">
    <text evidence="1">Belongs to the class-I aminoacyl-tRNA synthetase family.</text>
</comment>
<evidence type="ECO:0000255" key="1">
    <source>
        <dbReference type="HAMAP-Rule" id="MF_00140"/>
    </source>
</evidence>